<sequence>MTFTNKEKNCKQSKSLAALMTKFKRSQLILKHQANNIALELWNENDINLSKQLIELIEDTFSMLKKETVDFIYDIYIYGKKPCDIGYSNSTYYKKLNKAANSFFDHFVWDSSILDKRIITNGSNSQRTTNSK</sequence>
<keyword id="KW-1185">Reference proteome</keyword>
<dbReference type="EMBL" id="L43967">
    <property type="protein sequence ID" value="AAC71506.1"/>
    <property type="molecule type" value="Genomic_DNA"/>
</dbReference>
<dbReference type="PIR" id="D64231">
    <property type="entry name" value="D64231"/>
</dbReference>
<dbReference type="RefSeq" id="WP_010869406.1">
    <property type="nucleotide sequence ID" value="NC_000908.2"/>
</dbReference>
<dbReference type="SMR" id="P47526"/>
<dbReference type="STRING" id="243273.MG_284"/>
<dbReference type="GeneID" id="88282445"/>
<dbReference type="KEGG" id="mge:MG_284"/>
<dbReference type="eggNOG" id="ENOG5030NK9">
    <property type="taxonomic scope" value="Bacteria"/>
</dbReference>
<dbReference type="HOGENOM" id="CLU_2024168_0_0_14"/>
<dbReference type="InParanoid" id="P47526"/>
<dbReference type="OrthoDB" id="9912564at2"/>
<dbReference type="BioCyc" id="MGEN243273:G1GJ2-347-MONOMER"/>
<dbReference type="Proteomes" id="UP000000807">
    <property type="component" value="Chromosome"/>
</dbReference>
<dbReference type="NCBIfam" id="NF045770">
    <property type="entry name" value="MPN403_MG284_C"/>
    <property type="match status" value="1"/>
</dbReference>
<organism>
    <name type="scientific">Mycoplasma genitalium (strain ATCC 33530 / DSM 19775 / NCTC 10195 / G37)</name>
    <name type="common">Mycoplasmoides genitalium</name>
    <dbReference type="NCBI Taxonomy" id="243273"/>
    <lineage>
        <taxon>Bacteria</taxon>
        <taxon>Bacillati</taxon>
        <taxon>Mycoplasmatota</taxon>
        <taxon>Mycoplasmoidales</taxon>
        <taxon>Mycoplasmoidaceae</taxon>
        <taxon>Mycoplasmoides</taxon>
    </lineage>
</organism>
<accession>P47526</accession>
<name>Y284_MYCGE</name>
<feature type="chain" id="PRO_0000210510" description="Uncharacterized protein MG284">
    <location>
        <begin position="1"/>
        <end position="132"/>
    </location>
</feature>
<reference key="1">
    <citation type="journal article" date="1995" name="Science">
        <title>The minimal gene complement of Mycoplasma genitalium.</title>
        <authorList>
            <person name="Fraser C.M."/>
            <person name="Gocayne J.D."/>
            <person name="White O."/>
            <person name="Adams M.D."/>
            <person name="Clayton R.A."/>
            <person name="Fleischmann R.D."/>
            <person name="Bult C.J."/>
            <person name="Kerlavage A.R."/>
            <person name="Sutton G.G."/>
            <person name="Kelley J.M."/>
            <person name="Fritchman J.L."/>
            <person name="Weidman J.F."/>
            <person name="Small K.V."/>
            <person name="Sandusky M."/>
            <person name="Fuhrmann J.L."/>
            <person name="Nguyen D.T."/>
            <person name="Utterback T.R."/>
            <person name="Saudek D.M."/>
            <person name="Phillips C.A."/>
            <person name="Merrick J.M."/>
            <person name="Tomb J.-F."/>
            <person name="Dougherty B.A."/>
            <person name="Bott K.F."/>
            <person name="Hu P.-C."/>
            <person name="Lucier T.S."/>
            <person name="Peterson S.N."/>
            <person name="Smith H.O."/>
            <person name="Hutchison C.A. III"/>
            <person name="Venter J.C."/>
        </authorList>
    </citation>
    <scope>NUCLEOTIDE SEQUENCE [LARGE SCALE GENOMIC DNA]</scope>
    <source>
        <strain>ATCC 33530 / DSM 19775 / NCTC 10195 / G37</strain>
    </source>
</reference>
<protein>
    <recommendedName>
        <fullName>Uncharacterized protein MG284</fullName>
    </recommendedName>
</protein>
<gene>
    <name type="ordered locus">MG284</name>
</gene>
<proteinExistence type="predicted"/>